<organism>
    <name type="scientific">Clostridium perfringens (strain SM101 / Type A)</name>
    <dbReference type="NCBI Taxonomy" id="289380"/>
    <lineage>
        <taxon>Bacteria</taxon>
        <taxon>Bacillati</taxon>
        <taxon>Bacillota</taxon>
        <taxon>Clostridia</taxon>
        <taxon>Eubacteriales</taxon>
        <taxon>Clostridiaceae</taxon>
        <taxon>Clostridium</taxon>
    </lineage>
</organism>
<gene>
    <name evidence="1" type="primary">grpE</name>
    <name type="ordered locus">CPR_2006</name>
</gene>
<dbReference type="EMBL" id="CP000312">
    <property type="protein sequence ID" value="ABG86655.1"/>
    <property type="molecule type" value="Genomic_DNA"/>
</dbReference>
<dbReference type="RefSeq" id="WP_011592865.1">
    <property type="nucleotide sequence ID" value="NC_008262.1"/>
</dbReference>
<dbReference type="SMR" id="Q0SRE2"/>
<dbReference type="KEGG" id="cpr:CPR_2006"/>
<dbReference type="Proteomes" id="UP000001824">
    <property type="component" value="Chromosome"/>
</dbReference>
<dbReference type="GO" id="GO:0005737">
    <property type="term" value="C:cytoplasm"/>
    <property type="evidence" value="ECO:0007669"/>
    <property type="project" value="UniProtKB-SubCell"/>
</dbReference>
<dbReference type="GO" id="GO:0000774">
    <property type="term" value="F:adenyl-nucleotide exchange factor activity"/>
    <property type="evidence" value="ECO:0007669"/>
    <property type="project" value="InterPro"/>
</dbReference>
<dbReference type="GO" id="GO:0042803">
    <property type="term" value="F:protein homodimerization activity"/>
    <property type="evidence" value="ECO:0007669"/>
    <property type="project" value="InterPro"/>
</dbReference>
<dbReference type="GO" id="GO:0051087">
    <property type="term" value="F:protein-folding chaperone binding"/>
    <property type="evidence" value="ECO:0007669"/>
    <property type="project" value="InterPro"/>
</dbReference>
<dbReference type="GO" id="GO:0051082">
    <property type="term" value="F:unfolded protein binding"/>
    <property type="evidence" value="ECO:0007669"/>
    <property type="project" value="TreeGrafter"/>
</dbReference>
<dbReference type="GO" id="GO:0006457">
    <property type="term" value="P:protein folding"/>
    <property type="evidence" value="ECO:0007669"/>
    <property type="project" value="InterPro"/>
</dbReference>
<dbReference type="CDD" id="cd00446">
    <property type="entry name" value="GrpE"/>
    <property type="match status" value="1"/>
</dbReference>
<dbReference type="FunFam" id="2.30.22.10:FF:000001">
    <property type="entry name" value="Protein GrpE"/>
    <property type="match status" value="1"/>
</dbReference>
<dbReference type="Gene3D" id="3.90.20.20">
    <property type="match status" value="1"/>
</dbReference>
<dbReference type="Gene3D" id="2.30.22.10">
    <property type="entry name" value="Head domain of nucleotide exchange factor GrpE"/>
    <property type="match status" value="1"/>
</dbReference>
<dbReference type="HAMAP" id="MF_01151">
    <property type="entry name" value="GrpE"/>
    <property type="match status" value="1"/>
</dbReference>
<dbReference type="InterPro" id="IPR000740">
    <property type="entry name" value="GrpE"/>
</dbReference>
<dbReference type="InterPro" id="IPR013805">
    <property type="entry name" value="GrpE_coiled_coil"/>
</dbReference>
<dbReference type="InterPro" id="IPR009012">
    <property type="entry name" value="GrpE_head"/>
</dbReference>
<dbReference type="NCBIfam" id="NF010738">
    <property type="entry name" value="PRK14140.1"/>
    <property type="match status" value="1"/>
</dbReference>
<dbReference type="NCBIfam" id="NF010757">
    <property type="entry name" value="PRK14160.1"/>
    <property type="match status" value="1"/>
</dbReference>
<dbReference type="PANTHER" id="PTHR21237">
    <property type="entry name" value="GRPE PROTEIN"/>
    <property type="match status" value="1"/>
</dbReference>
<dbReference type="PANTHER" id="PTHR21237:SF23">
    <property type="entry name" value="GRPE PROTEIN HOMOLOG, MITOCHONDRIAL"/>
    <property type="match status" value="1"/>
</dbReference>
<dbReference type="Pfam" id="PF01025">
    <property type="entry name" value="GrpE"/>
    <property type="match status" value="1"/>
</dbReference>
<dbReference type="PRINTS" id="PR00773">
    <property type="entry name" value="GRPEPROTEIN"/>
</dbReference>
<dbReference type="SUPFAM" id="SSF58014">
    <property type="entry name" value="Coiled-coil domain of nucleotide exchange factor GrpE"/>
    <property type="match status" value="1"/>
</dbReference>
<dbReference type="SUPFAM" id="SSF51064">
    <property type="entry name" value="Head domain of nucleotide exchange factor GrpE"/>
    <property type="match status" value="1"/>
</dbReference>
<dbReference type="PROSITE" id="PS01071">
    <property type="entry name" value="GRPE"/>
    <property type="match status" value="1"/>
</dbReference>
<feature type="chain" id="PRO_1000053571" description="Protein GrpE">
    <location>
        <begin position="1"/>
        <end position="208"/>
    </location>
</feature>
<feature type="region of interest" description="Disordered" evidence="2">
    <location>
        <begin position="1"/>
        <end position="38"/>
    </location>
</feature>
<feature type="compositionally biased region" description="Basic and acidic residues" evidence="2">
    <location>
        <begin position="1"/>
        <end position="25"/>
    </location>
</feature>
<feature type="compositionally biased region" description="Acidic residues" evidence="2">
    <location>
        <begin position="29"/>
        <end position="38"/>
    </location>
</feature>
<reference key="1">
    <citation type="journal article" date="2006" name="Genome Res.">
        <title>Skewed genomic variability in strains of the toxigenic bacterial pathogen, Clostridium perfringens.</title>
        <authorList>
            <person name="Myers G.S.A."/>
            <person name="Rasko D.A."/>
            <person name="Cheung J.K."/>
            <person name="Ravel J."/>
            <person name="Seshadri R."/>
            <person name="DeBoy R.T."/>
            <person name="Ren Q."/>
            <person name="Varga J."/>
            <person name="Awad M.M."/>
            <person name="Brinkac L.M."/>
            <person name="Daugherty S.C."/>
            <person name="Haft D.H."/>
            <person name="Dodson R.J."/>
            <person name="Madupu R."/>
            <person name="Nelson W.C."/>
            <person name="Rosovitz M.J."/>
            <person name="Sullivan S.A."/>
            <person name="Khouri H."/>
            <person name="Dimitrov G.I."/>
            <person name="Watkins K.L."/>
            <person name="Mulligan S."/>
            <person name="Benton J."/>
            <person name="Radune D."/>
            <person name="Fisher D.J."/>
            <person name="Atkins H.S."/>
            <person name="Hiscox T."/>
            <person name="Jost B.H."/>
            <person name="Billington S.J."/>
            <person name="Songer J.G."/>
            <person name="McClane B.A."/>
            <person name="Titball R.W."/>
            <person name="Rood J.I."/>
            <person name="Melville S.B."/>
            <person name="Paulsen I.T."/>
        </authorList>
    </citation>
    <scope>NUCLEOTIDE SEQUENCE [LARGE SCALE GENOMIC DNA]</scope>
    <source>
        <strain>SM101 / Type A</strain>
    </source>
</reference>
<proteinExistence type="inferred from homology"/>
<keyword id="KW-0143">Chaperone</keyword>
<keyword id="KW-0963">Cytoplasm</keyword>
<keyword id="KW-0346">Stress response</keyword>
<evidence type="ECO:0000255" key="1">
    <source>
        <dbReference type="HAMAP-Rule" id="MF_01151"/>
    </source>
</evidence>
<evidence type="ECO:0000256" key="2">
    <source>
        <dbReference type="SAM" id="MobiDB-lite"/>
    </source>
</evidence>
<comment type="function">
    <text evidence="1">Participates actively in the response to hyperosmotic and heat shock by preventing the aggregation of stress-denatured proteins, in association with DnaK and GrpE. It is the nucleotide exchange factor for DnaK and may function as a thermosensor. Unfolded proteins bind initially to DnaJ; upon interaction with the DnaJ-bound protein, DnaK hydrolyzes its bound ATP, resulting in the formation of a stable complex. GrpE releases ADP from DnaK; ATP binding to DnaK triggers the release of the substrate protein, thus completing the reaction cycle. Several rounds of ATP-dependent interactions between DnaJ, DnaK and GrpE are required for fully efficient folding.</text>
</comment>
<comment type="subunit">
    <text evidence="1">Homodimer.</text>
</comment>
<comment type="subcellular location">
    <subcellularLocation>
        <location evidence="1">Cytoplasm</location>
    </subcellularLocation>
</comment>
<comment type="similarity">
    <text evidence="1">Belongs to the GrpE family.</text>
</comment>
<name>GRPE_CLOPS</name>
<accession>Q0SRE2</accession>
<sequence>MVDNKDFNEELKESIQEELDNETKSENPNIDEEVEEVSEDIKADEKVIDFEELKALKEENTMFKSKTKKLENELEALKDRLLRISSEYENYRKRTDKEKERIYTDACEDVLIKMLPVLDNLERALAVDGTVEDLKKGVEMTVRQFEDALEKLQVEEISTENGFDPELHQAMMVVEQEGSEPNQVAQVFQKGYKRGDKVIRHSMVTVTK</sequence>
<protein>
    <recommendedName>
        <fullName evidence="1">Protein GrpE</fullName>
    </recommendedName>
    <alternativeName>
        <fullName evidence="1">HSP-70 cofactor</fullName>
    </alternativeName>
</protein>